<reference key="1">
    <citation type="journal article" date="1995" name="DNA Res.">
        <title>Sequence analysis of the genome of the unicellular cyanobacterium Synechocystis sp. strain PCC6803. I. Sequence features in the 1 Mb region from map positions 64% to 92% of the genome.</title>
        <authorList>
            <person name="Kaneko T."/>
            <person name="Tanaka A."/>
            <person name="Sato S."/>
            <person name="Kotani H."/>
            <person name="Sazuka T."/>
            <person name="Miyajima N."/>
            <person name="Sugiura M."/>
            <person name="Tabata S."/>
        </authorList>
    </citation>
    <scope>NUCLEOTIDE SEQUENCE [LARGE SCALE GENOMIC DNA]</scope>
    <source>
        <strain>ATCC 27184 / PCC 6803 / N-1</strain>
    </source>
</reference>
<reference key="2">
    <citation type="journal article" date="1996" name="DNA Res.">
        <title>Sequence analysis of the genome of the unicellular cyanobacterium Synechocystis sp. strain PCC6803. II. Sequence determination of the entire genome and assignment of potential protein-coding regions.</title>
        <authorList>
            <person name="Kaneko T."/>
            <person name="Sato S."/>
            <person name="Kotani H."/>
            <person name="Tanaka A."/>
            <person name="Asamizu E."/>
            <person name="Nakamura Y."/>
            <person name="Miyajima N."/>
            <person name="Hirosawa M."/>
            <person name="Sugiura M."/>
            <person name="Sasamoto S."/>
            <person name="Kimura T."/>
            <person name="Hosouchi T."/>
            <person name="Matsuno A."/>
            <person name="Muraki A."/>
            <person name="Nakazaki N."/>
            <person name="Naruo K."/>
            <person name="Okumura S."/>
            <person name="Shimpo S."/>
            <person name="Takeuchi C."/>
            <person name="Wada T."/>
            <person name="Watanabe A."/>
            <person name="Yamada M."/>
            <person name="Yasuda M."/>
            <person name="Tabata S."/>
        </authorList>
    </citation>
    <scope>NUCLEOTIDE SEQUENCE [LARGE SCALE GENOMIC DNA]</scope>
    <source>
        <strain>ATCC 27184 / PCC 6803 / Kazusa</strain>
    </source>
</reference>
<gene>
    <name type="primary">asd</name>
    <name type="ordered locus">slr0549</name>
</gene>
<name>DHAS_SYNY3</name>
<keyword id="KW-0028">Amino-acid biosynthesis</keyword>
<keyword id="KW-0220">Diaminopimelate biosynthesis</keyword>
<keyword id="KW-0457">Lysine biosynthesis</keyword>
<keyword id="KW-0486">Methionine biosynthesis</keyword>
<keyword id="KW-0521">NADP</keyword>
<keyword id="KW-0560">Oxidoreductase</keyword>
<keyword id="KW-1185">Reference proteome</keyword>
<keyword id="KW-0791">Threonine biosynthesis</keyword>
<comment type="function">
    <text evidence="1">Catalyzes the NADPH-dependent formation of L-aspartate-semialdehyde (L-ASA) by the reductive dephosphorylation of L-aspartyl-4-phosphate.</text>
</comment>
<comment type="catalytic activity">
    <reaction>
        <text>L-aspartate 4-semialdehyde + phosphate + NADP(+) = 4-phospho-L-aspartate + NADPH + H(+)</text>
        <dbReference type="Rhea" id="RHEA:24284"/>
        <dbReference type="ChEBI" id="CHEBI:15378"/>
        <dbReference type="ChEBI" id="CHEBI:43474"/>
        <dbReference type="ChEBI" id="CHEBI:57535"/>
        <dbReference type="ChEBI" id="CHEBI:57783"/>
        <dbReference type="ChEBI" id="CHEBI:58349"/>
        <dbReference type="ChEBI" id="CHEBI:537519"/>
        <dbReference type="EC" id="1.2.1.11"/>
    </reaction>
</comment>
<comment type="pathway">
    <text>Amino-acid biosynthesis; L-lysine biosynthesis via DAP pathway; (S)-tetrahydrodipicolinate from L-aspartate: step 2/4.</text>
</comment>
<comment type="pathway">
    <text>Amino-acid biosynthesis; L-methionine biosynthesis via de novo pathway; L-homoserine from L-aspartate: step 2/3.</text>
</comment>
<comment type="pathway">
    <text>Amino-acid biosynthesis; L-threonine biosynthesis; L-threonine from L-aspartate: step 2/5.</text>
</comment>
<comment type="subunit">
    <text evidence="1">Homodimer.</text>
</comment>
<comment type="similarity">
    <text evidence="2">Belongs to the aspartate-semialdehyde dehydrogenase family.</text>
</comment>
<comment type="sequence caution" evidence="2">
    <conflict type="erroneous initiation">
        <sequence resource="EMBL-CDS" id="BAA10869"/>
    </conflict>
    <text>Truncated N-terminus.</text>
</comment>
<accession>Q55512</accession>
<evidence type="ECO:0000250" key="1"/>
<evidence type="ECO:0000305" key="2"/>
<organism>
    <name type="scientific">Synechocystis sp. (strain ATCC 27184 / PCC 6803 / Kazusa)</name>
    <dbReference type="NCBI Taxonomy" id="1111708"/>
    <lineage>
        <taxon>Bacteria</taxon>
        <taxon>Bacillati</taxon>
        <taxon>Cyanobacteriota</taxon>
        <taxon>Cyanophyceae</taxon>
        <taxon>Synechococcales</taxon>
        <taxon>Merismopediaceae</taxon>
        <taxon>Synechocystis</taxon>
    </lineage>
</organism>
<dbReference type="EC" id="1.2.1.11"/>
<dbReference type="EMBL" id="BA000022">
    <property type="protein sequence ID" value="BAA10869.1"/>
    <property type="status" value="ALT_INIT"/>
    <property type="molecule type" value="Genomic_DNA"/>
</dbReference>
<dbReference type="PIR" id="S76022">
    <property type="entry name" value="S76022"/>
</dbReference>
<dbReference type="SMR" id="Q55512"/>
<dbReference type="FunCoup" id="Q55512">
    <property type="interactions" value="461"/>
</dbReference>
<dbReference type="IntAct" id="Q55512">
    <property type="interactions" value="2"/>
</dbReference>
<dbReference type="STRING" id="1148.gene:10500375"/>
<dbReference type="PaxDb" id="1148-1001379"/>
<dbReference type="EnsemblBacteria" id="BAA10869">
    <property type="protein sequence ID" value="BAA10869"/>
    <property type="gene ID" value="BAA10869"/>
</dbReference>
<dbReference type="KEGG" id="syn:slr0549"/>
<dbReference type="eggNOG" id="COG0136">
    <property type="taxonomic scope" value="Bacteria"/>
</dbReference>
<dbReference type="InParanoid" id="Q55512"/>
<dbReference type="UniPathway" id="UPA00034">
    <property type="reaction ID" value="UER00016"/>
</dbReference>
<dbReference type="UniPathway" id="UPA00050">
    <property type="reaction ID" value="UER00463"/>
</dbReference>
<dbReference type="UniPathway" id="UPA00051">
    <property type="reaction ID" value="UER00464"/>
</dbReference>
<dbReference type="Proteomes" id="UP000001425">
    <property type="component" value="Chromosome"/>
</dbReference>
<dbReference type="GO" id="GO:0004073">
    <property type="term" value="F:aspartate-semialdehyde dehydrogenase activity"/>
    <property type="evidence" value="ECO:0007669"/>
    <property type="project" value="UniProtKB-UniRule"/>
</dbReference>
<dbReference type="GO" id="GO:0051287">
    <property type="term" value="F:NAD binding"/>
    <property type="evidence" value="ECO:0007669"/>
    <property type="project" value="InterPro"/>
</dbReference>
<dbReference type="GO" id="GO:0050661">
    <property type="term" value="F:NADP binding"/>
    <property type="evidence" value="ECO:0007669"/>
    <property type="project" value="UniProtKB-UniRule"/>
</dbReference>
<dbReference type="GO" id="GO:0046983">
    <property type="term" value="F:protein dimerization activity"/>
    <property type="evidence" value="ECO:0007669"/>
    <property type="project" value="InterPro"/>
</dbReference>
<dbReference type="GO" id="GO:0071266">
    <property type="term" value="P:'de novo' L-methionine biosynthetic process"/>
    <property type="evidence" value="ECO:0007669"/>
    <property type="project" value="UniProtKB-UniRule"/>
</dbReference>
<dbReference type="GO" id="GO:0019877">
    <property type="term" value="P:diaminopimelate biosynthetic process"/>
    <property type="evidence" value="ECO:0007669"/>
    <property type="project" value="UniProtKB-UniRule"/>
</dbReference>
<dbReference type="GO" id="GO:0009097">
    <property type="term" value="P:isoleucine biosynthetic process"/>
    <property type="evidence" value="ECO:0007669"/>
    <property type="project" value="InterPro"/>
</dbReference>
<dbReference type="GO" id="GO:0009089">
    <property type="term" value="P:lysine biosynthetic process via diaminopimelate"/>
    <property type="evidence" value="ECO:0007669"/>
    <property type="project" value="UniProtKB-UniRule"/>
</dbReference>
<dbReference type="GO" id="GO:0009088">
    <property type="term" value="P:threonine biosynthetic process"/>
    <property type="evidence" value="ECO:0007669"/>
    <property type="project" value="UniProtKB-UniRule"/>
</dbReference>
<dbReference type="CDD" id="cd18131">
    <property type="entry name" value="ASADH_C_bac_euk_like"/>
    <property type="match status" value="1"/>
</dbReference>
<dbReference type="CDD" id="cd02316">
    <property type="entry name" value="VcASADH2_like_N"/>
    <property type="match status" value="1"/>
</dbReference>
<dbReference type="Gene3D" id="3.30.360.10">
    <property type="entry name" value="Dihydrodipicolinate Reductase, domain 2"/>
    <property type="match status" value="1"/>
</dbReference>
<dbReference type="Gene3D" id="3.40.50.720">
    <property type="entry name" value="NAD(P)-binding Rossmann-like Domain"/>
    <property type="match status" value="1"/>
</dbReference>
<dbReference type="HAMAP" id="MF_02121">
    <property type="entry name" value="ASADH"/>
    <property type="match status" value="1"/>
</dbReference>
<dbReference type="InterPro" id="IPR012080">
    <property type="entry name" value="Asp_semialdehyde_DH"/>
</dbReference>
<dbReference type="InterPro" id="IPR005986">
    <property type="entry name" value="Asp_semialdehyde_DH_beta"/>
</dbReference>
<dbReference type="InterPro" id="IPR036291">
    <property type="entry name" value="NAD(P)-bd_dom_sf"/>
</dbReference>
<dbReference type="InterPro" id="IPR000534">
    <property type="entry name" value="Semialdehyde_DH_NAD-bd"/>
</dbReference>
<dbReference type="InterPro" id="IPR012280">
    <property type="entry name" value="Semialdhyde_DH_dimer_dom"/>
</dbReference>
<dbReference type="NCBIfam" id="TIGR01296">
    <property type="entry name" value="asd_B"/>
    <property type="match status" value="1"/>
</dbReference>
<dbReference type="NCBIfam" id="NF011456">
    <property type="entry name" value="PRK14874.1"/>
    <property type="match status" value="1"/>
</dbReference>
<dbReference type="PANTHER" id="PTHR46278:SF2">
    <property type="entry name" value="ASPARTATE-SEMIALDEHYDE DEHYDROGENASE"/>
    <property type="match status" value="1"/>
</dbReference>
<dbReference type="PANTHER" id="PTHR46278">
    <property type="entry name" value="DEHYDROGENASE, PUTATIVE-RELATED"/>
    <property type="match status" value="1"/>
</dbReference>
<dbReference type="Pfam" id="PF01118">
    <property type="entry name" value="Semialdhyde_dh"/>
    <property type="match status" value="1"/>
</dbReference>
<dbReference type="Pfam" id="PF02774">
    <property type="entry name" value="Semialdhyde_dhC"/>
    <property type="match status" value="1"/>
</dbReference>
<dbReference type="PIRSF" id="PIRSF000148">
    <property type="entry name" value="ASA_dh"/>
    <property type="match status" value="1"/>
</dbReference>
<dbReference type="SMART" id="SM00859">
    <property type="entry name" value="Semialdhyde_dh"/>
    <property type="match status" value="1"/>
</dbReference>
<dbReference type="SUPFAM" id="SSF55347">
    <property type="entry name" value="Glyceraldehyde-3-phosphate dehydrogenase-like, C-terminal domain"/>
    <property type="match status" value="1"/>
</dbReference>
<dbReference type="SUPFAM" id="SSF51735">
    <property type="entry name" value="NAD(P)-binding Rossmann-fold domains"/>
    <property type="match status" value="1"/>
</dbReference>
<proteinExistence type="inferred from homology"/>
<protein>
    <recommendedName>
        <fullName>Aspartate-semialdehyde dehydrogenase</fullName>
        <shortName>ASA dehydrogenase</shortName>
        <shortName>ASADH</shortName>
        <ecNumber>1.2.1.11</ecNumber>
    </recommendedName>
    <alternativeName>
        <fullName>Aspartate-beta-semialdehyde dehydrogenase</fullName>
    </alternativeName>
</protein>
<sequence>MPSPIRVAILGATGAVGTELLELLASRNFPLAELKLLASPRSAGKTLEFQGEKLPIQAVDGSAFKGCDLVLASAGGSTSKRWAEEITKAGAVMVDNSSAFRMVPEVPLVVPEINPEAAQNHQGIIANPNCTTILMGVAIYPLHQLQPIKRIVVATYQSASGAGAMAMEEVKHQSRDILEGKIPQAEILPYPLAFNLFPHNSPITANHYCEEEMKMVQETRKIFAAEDIRITATCVRVPVLRAHSEAVNLEFATPFPVELAKTAIAKAPGVKLVEDWQKNYFPMPMDATGQDDVLVGRIRQDISHPNGLDLWLCGDQIRKGAALNAVQIAELLVERGWL</sequence>
<feature type="chain" id="PRO_0000141393" description="Aspartate-semialdehyde dehydrogenase">
    <location>
        <begin position="1"/>
        <end position="338"/>
    </location>
</feature>
<feature type="active site" description="Acyl-thioester intermediate" evidence="1">
    <location>
        <position position="130"/>
    </location>
</feature>
<feature type="active site" description="Proton acceptor" evidence="1">
    <location>
        <position position="243"/>
    </location>
</feature>
<feature type="binding site" evidence="1">
    <location>
        <begin position="13"/>
        <end position="16"/>
    </location>
    <ligand>
        <name>NADP(+)</name>
        <dbReference type="ChEBI" id="CHEBI:58349"/>
    </ligand>
</feature>
<feature type="binding site" evidence="1">
    <location>
        <begin position="41"/>
        <end position="42"/>
    </location>
    <ligand>
        <name>NADP(+)</name>
        <dbReference type="ChEBI" id="CHEBI:58349"/>
    </ligand>
</feature>
<feature type="binding site" evidence="1">
    <location>
        <position position="101"/>
    </location>
    <ligand>
        <name>phosphate</name>
        <dbReference type="ChEBI" id="CHEBI:43474"/>
    </ligand>
</feature>
<feature type="binding site" evidence="1">
    <location>
        <position position="157"/>
    </location>
    <ligand>
        <name>substrate</name>
    </ligand>
</feature>
<feature type="binding site" evidence="1">
    <location>
        <begin position="160"/>
        <end position="161"/>
    </location>
    <ligand>
        <name>NADP(+)</name>
        <dbReference type="ChEBI" id="CHEBI:58349"/>
    </ligand>
</feature>
<feature type="binding site" evidence="1">
    <location>
        <position position="214"/>
    </location>
    <ligand>
        <name>phosphate</name>
        <dbReference type="ChEBI" id="CHEBI:43474"/>
    </ligand>
</feature>
<feature type="binding site" evidence="1">
    <location>
        <position position="236"/>
    </location>
    <ligand>
        <name>substrate</name>
    </ligand>
</feature>
<feature type="binding site" evidence="1">
    <location>
        <position position="316"/>
    </location>
    <ligand>
        <name>NADP(+)</name>
        <dbReference type="ChEBI" id="CHEBI:58349"/>
    </ligand>
</feature>